<sequence length="163" mass="18411">MAMVSGRRSTLNPDAPLFIPAAVRQVEDFSPEWWQLVTTSTWYPDYWISQQQQGADGFYDNGENENGGGHIDVADLLPESFDFDDMEDFFDTDAAEFDQGFDGRMYYQAPSEFGFGKNGEMVKKSSGNRSPRSIVEPAKYAEKPAKWGNQRVAAAPRNIHQPR</sequence>
<evidence type="ECO:0000256" key="1">
    <source>
        <dbReference type="SAM" id="MobiDB-lite"/>
    </source>
</evidence>
<evidence type="ECO:0000269" key="2">
    <source>
    </source>
</evidence>
<evidence type="ECO:0000269" key="3">
    <source>
    </source>
</evidence>
<evidence type="ECO:0000269" key="4">
    <source>
    </source>
</evidence>
<evidence type="ECO:0000269" key="5">
    <source>
    </source>
</evidence>
<evidence type="ECO:0000269" key="6">
    <source>
    </source>
</evidence>
<evidence type="ECO:0000269" key="7">
    <source>
    </source>
</evidence>
<evidence type="ECO:0000269" key="8">
    <source>
    </source>
</evidence>
<evidence type="ECO:0000269" key="9">
    <source>
    </source>
</evidence>
<evidence type="ECO:0000303" key="10">
    <source>
    </source>
</evidence>
<evidence type="ECO:0000305" key="11"/>
<evidence type="ECO:0000305" key="12">
    <source>
    </source>
</evidence>
<dbReference type="EMBL" id="D30719">
    <property type="protein sequence ID" value="BAA06384.1"/>
    <property type="molecule type" value="mRNA"/>
</dbReference>
<dbReference type="EMBL" id="AC004625">
    <property type="protein sequence ID" value="AAC23728.1"/>
    <property type="molecule type" value="Genomic_DNA"/>
</dbReference>
<dbReference type="EMBL" id="AC005662">
    <property type="protein sequence ID" value="AAM15070.1"/>
    <property type="molecule type" value="Genomic_DNA"/>
</dbReference>
<dbReference type="EMBL" id="CP002685">
    <property type="protein sequence ID" value="AEC09973.1"/>
    <property type="molecule type" value="Genomic_DNA"/>
</dbReference>
<dbReference type="EMBL" id="CP002685">
    <property type="protein sequence ID" value="AEC09974.1"/>
    <property type="molecule type" value="Genomic_DNA"/>
</dbReference>
<dbReference type="EMBL" id="CP002685">
    <property type="protein sequence ID" value="AEC09975.1"/>
    <property type="molecule type" value="Genomic_DNA"/>
</dbReference>
<dbReference type="EMBL" id="CP002685">
    <property type="protein sequence ID" value="AEC09976.1"/>
    <property type="molecule type" value="Genomic_DNA"/>
</dbReference>
<dbReference type="EMBL" id="CP002685">
    <property type="protein sequence ID" value="AEC09977.1"/>
    <property type="molecule type" value="Genomic_DNA"/>
</dbReference>
<dbReference type="EMBL" id="AF372909">
    <property type="protein sequence ID" value="AAK49625.1"/>
    <property type="molecule type" value="mRNA"/>
</dbReference>
<dbReference type="EMBL" id="AY056399">
    <property type="protein sequence ID" value="AAL08255.1"/>
    <property type="molecule type" value="mRNA"/>
</dbReference>
<dbReference type="EMBL" id="AY065120">
    <property type="protein sequence ID" value="AAL38296.1"/>
    <property type="molecule type" value="mRNA"/>
</dbReference>
<dbReference type="EMBL" id="AY081636">
    <property type="protein sequence ID" value="AAM10198.1"/>
    <property type="molecule type" value="mRNA"/>
</dbReference>
<dbReference type="EMBL" id="BT002663">
    <property type="protein sequence ID" value="AAO11579.1"/>
    <property type="molecule type" value="mRNA"/>
</dbReference>
<dbReference type="EMBL" id="BX820705">
    <property type="status" value="NOT_ANNOTATED_CDS"/>
    <property type="molecule type" value="mRNA"/>
</dbReference>
<dbReference type="EMBL" id="AK317136">
    <property type="protein sequence ID" value="BAH19822.1"/>
    <property type="molecule type" value="mRNA"/>
</dbReference>
<dbReference type="EMBL" id="AY087077">
    <property type="protein sequence ID" value="AAM64638.1"/>
    <property type="molecule type" value="mRNA"/>
</dbReference>
<dbReference type="PIR" id="T02438">
    <property type="entry name" value="T02438"/>
</dbReference>
<dbReference type="RefSeq" id="NP_001189727.1">
    <molecule id="Q39096-1"/>
    <property type="nucleotide sequence ID" value="NM_001202798.1"/>
</dbReference>
<dbReference type="RefSeq" id="NP_181674.1">
    <molecule id="Q39096-1"/>
    <property type="nucleotide sequence ID" value="NM_129706.4"/>
</dbReference>
<dbReference type="RefSeq" id="NP_850350.1">
    <molecule id="Q39096-1"/>
    <property type="nucleotide sequence ID" value="NM_180019.3"/>
</dbReference>
<dbReference type="RefSeq" id="NP_973657.1">
    <molecule id="Q39096-2"/>
    <property type="nucleotide sequence ID" value="NM_201928.2"/>
</dbReference>
<dbReference type="RefSeq" id="NP_973658.1">
    <molecule id="Q39096-1"/>
    <property type="nucleotide sequence ID" value="NM_201929.2"/>
</dbReference>
<dbReference type="BioGRID" id="4078">
    <property type="interactions" value="4"/>
</dbReference>
<dbReference type="ELM" id="Q39096"/>
<dbReference type="FunCoup" id="Q39096">
    <property type="interactions" value="883"/>
</dbReference>
<dbReference type="IntAct" id="Q39096">
    <property type="interactions" value="3"/>
</dbReference>
<dbReference type="STRING" id="3702.Q39096"/>
<dbReference type="iPTMnet" id="Q39096"/>
<dbReference type="PaxDb" id="3702-AT2G41430.4"/>
<dbReference type="ProteomicsDB" id="221865">
    <molecule id="Q39096-1"/>
</dbReference>
<dbReference type="EnsemblPlants" id="AT2G41430.1">
    <molecule id="Q39096-1"/>
    <property type="protein sequence ID" value="AT2G41430.1"/>
    <property type="gene ID" value="AT2G41430"/>
</dbReference>
<dbReference type="EnsemblPlants" id="AT2G41430.2">
    <molecule id="Q39096-1"/>
    <property type="protein sequence ID" value="AT2G41430.2"/>
    <property type="gene ID" value="AT2G41430"/>
</dbReference>
<dbReference type="EnsemblPlants" id="AT2G41430.3">
    <molecule id="Q39096-2"/>
    <property type="protein sequence ID" value="AT2G41430.3"/>
    <property type="gene ID" value="AT2G41430"/>
</dbReference>
<dbReference type="EnsemblPlants" id="AT2G41430.4">
    <molecule id="Q39096-1"/>
    <property type="protein sequence ID" value="AT2G41430.4"/>
    <property type="gene ID" value="AT2G41430"/>
</dbReference>
<dbReference type="EnsemblPlants" id="AT2G41430.5">
    <molecule id="Q39096-1"/>
    <property type="protein sequence ID" value="AT2G41430.5"/>
    <property type="gene ID" value="AT2G41430"/>
</dbReference>
<dbReference type="GeneID" id="818741"/>
<dbReference type="Gramene" id="AT2G41430.1">
    <molecule id="Q39096-1"/>
    <property type="protein sequence ID" value="AT2G41430.1"/>
    <property type="gene ID" value="AT2G41430"/>
</dbReference>
<dbReference type="Gramene" id="AT2G41430.2">
    <molecule id="Q39096-1"/>
    <property type="protein sequence ID" value="AT2G41430.2"/>
    <property type="gene ID" value="AT2G41430"/>
</dbReference>
<dbReference type="Gramene" id="AT2G41430.3">
    <molecule id="Q39096-2"/>
    <property type="protein sequence ID" value="AT2G41430.3"/>
    <property type="gene ID" value="AT2G41430"/>
</dbReference>
<dbReference type="Gramene" id="AT2G41430.4">
    <molecule id="Q39096-1"/>
    <property type="protein sequence ID" value="AT2G41430.4"/>
    <property type="gene ID" value="AT2G41430"/>
</dbReference>
<dbReference type="Gramene" id="AT2G41430.5">
    <molecule id="Q39096-1"/>
    <property type="protein sequence ID" value="AT2G41430.5"/>
    <property type="gene ID" value="AT2G41430"/>
</dbReference>
<dbReference type="KEGG" id="ath:AT2G41430"/>
<dbReference type="Araport" id="AT2G41430"/>
<dbReference type="TAIR" id="AT2G41430">
    <property type="gene designation" value="ERD15"/>
</dbReference>
<dbReference type="eggNOG" id="ENOG502S19Q">
    <property type="taxonomic scope" value="Eukaryota"/>
</dbReference>
<dbReference type="HOGENOM" id="CLU_108773_0_0_1"/>
<dbReference type="InParanoid" id="Q39096"/>
<dbReference type="OMA" id="IMWNEEE"/>
<dbReference type="OrthoDB" id="628205at2759"/>
<dbReference type="PhylomeDB" id="Q39096"/>
<dbReference type="PRO" id="PR:Q39096"/>
<dbReference type="Proteomes" id="UP000006548">
    <property type="component" value="Chromosome 2"/>
</dbReference>
<dbReference type="ExpressionAtlas" id="Q39096">
    <property type="expression patterns" value="baseline and differential"/>
</dbReference>
<dbReference type="GO" id="GO:0005737">
    <property type="term" value="C:cytoplasm"/>
    <property type="evidence" value="ECO:0000250"/>
    <property type="project" value="TAIR"/>
</dbReference>
<dbReference type="GO" id="GO:0005829">
    <property type="term" value="C:cytosol"/>
    <property type="evidence" value="ECO:0007005"/>
    <property type="project" value="TAIR"/>
</dbReference>
<dbReference type="GO" id="GO:0042651">
    <property type="term" value="C:thylakoid membrane"/>
    <property type="evidence" value="ECO:0000304"/>
    <property type="project" value="TAIR"/>
</dbReference>
<dbReference type="GO" id="GO:0071456">
    <property type="term" value="P:cellular response to hypoxia"/>
    <property type="evidence" value="ECO:0007007"/>
    <property type="project" value="TAIR"/>
</dbReference>
<dbReference type="GO" id="GO:0010196">
    <property type="term" value="P:nonphotochemical quenching"/>
    <property type="evidence" value="ECO:0000315"/>
    <property type="project" value="TAIR"/>
</dbReference>
<dbReference type="GO" id="GO:0009617">
    <property type="term" value="P:response to bacterium"/>
    <property type="evidence" value="ECO:0000270"/>
    <property type="project" value="TAIR"/>
</dbReference>
<dbReference type="GO" id="GO:0009644">
    <property type="term" value="P:response to high light intensity"/>
    <property type="evidence" value="ECO:0000315"/>
    <property type="project" value="TAIR"/>
</dbReference>
<dbReference type="GO" id="GO:0009414">
    <property type="term" value="P:response to water deprivation"/>
    <property type="evidence" value="ECO:0000303"/>
    <property type="project" value="TAIR"/>
</dbReference>
<dbReference type="InterPro" id="IPR040414">
    <property type="entry name" value="CID1/CID2"/>
</dbReference>
<dbReference type="PANTHER" id="PTHR33790">
    <property type="entry name" value="OS05G0344200 PROTEIN"/>
    <property type="match status" value="1"/>
</dbReference>
<dbReference type="PANTHER" id="PTHR33790:SF10">
    <property type="entry name" value="PROTEIN EARLY RESPONSIVE TO DEHYDRATION 15"/>
    <property type="match status" value="1"/>
</dbReference>
<name>ERD15_ARATH</name>
<gene>
    <name type="primary">ERD15</name>
    <name type="synonym">CID1</name>
    <name type="synonym">LSR1</name>
    <name type="ordered locus">At2g41430</name>
    <name type="ORF">F13H10.2</name>
    <name type="ORF">T26J13.2</name>
</gene>
<comment type="function">
    <text evidence="6">Central component of stress responses that interacts with poly(A)-binding proteins. Negative regulator of abscisic acid (ABA) responses, including resistance to drought and freezing as well as stomatal closure regulation. Mediates resistance to the bacterial necrotroph pathogen Erwinia carotovora subsp. carotovora and promotes the induction of marker genes for systemic acquired resistance (SAR).</text>
</comment>
<comment type="subunit">
    <text evidence="5 7 8">Interacts with PAB2, PAB4 and PAB8. Interacts with MPC.</text>
</comment>
<comment type="subcellular location">
    <subcellularLocation>
        <location evidence="12">Cytoplasm</location>
    </subcellularLocation>
</comment>
<comment type="alternative products">
    <event type="alternative splicing"/>
    <isoform>
        <id>Q39096-1</id>
        <name>1</name>
        <sequence type="displayed"/>
    </isoform>
    <isoform>
        <id>Q39096-2</id>
        <name>2</name>
        <sequence type="described" ref="VSP_044341 VSP_044342"/>
    </isoform>
</comment>
<comment type="tissue specificity">
    <text evidence="5">Expressed in cauline leaves, stems, rosette leaves, immature siliques and primary inflorescences.</text>
</comment>
<comment type="induction">
    <text evidence="2 3 4 6 9">Strongly induced by abiotic stresses such as abscisic acid (ABA), salicylic acid (SA), wounding, high light, cold stress, oxidative stress, hypergravity and dehydration. Accumulates upon root colonization by the plant-growth-promoting rhizobacterium (PGPR) Paenibacillus polymyxa. Slightly reduced levels in response to UV-A illumination, salt stress and heat shock treatment.</text>
</comment>
<comment type="domain">
    <text>Contains a PAM2-like motif, which seems to be involved in the binding to the PABC/CTC domain of PAB proteins.</text>
</comment>
<comment type="disruption phenotype">
    <text evidence="6">Hypersensitive to abscisic acid (ABA) leading to improved tolerance to both drought and freezing, as well as impaired seed germination in the presence of ABA.</text>
</comment>
<reference key="1">
    <citation type="journal article" date="1994" name="Plant Physiol.">
        <title>ERD15, a cDNA for a dehydration-induced gene from Arabidopsis thaliana.</title>
        <authorList>
            <person name="Kiyosue T."/>
            <person name="Yamaguchi-Shinozaki K."/>
            <person name="Shinozaki K."/>
        </authorList>
    </citation>
    <scope>NUCLEOTIDE SEQUENCE [MRNA] (ISOFORM 1)</scope>
    <scope>INDUCTION BY DEHYDRATION</scope>
    <source>
        <strain>cv. Columbia</strain>
    </source>
</reference>
<reference key="2">
    <citation type="journal article" date="1999" name="Nature">
        <title>Sequence and analysis of chromosome 2 of the plant Arabidopsis thaliana.</title>
        <authorList>
            <person name="Lin X."/>
            <person name="Kaul S."/>
            <person name="Rounsley S.D."/>
            <person name="Shea T.P."/>
            <person name="Benito M.-I."/>
            <person name="Town C.D."/>
            <person name="Fujii C.Y."/>
            <person name="Mason T.M."/>
            <person name="Bowman C.L."/>
            <person name="Barnstead M.E."/>
            <person name="Feldblyum T.V."/>
            <person name="Buell C.R."/>
            <person name="Ketchum K.A."/>
            <person name="Lee J.J."/>
            <person name="Ronning C.M."/>
            <person name="Koo H.L."/>
            <person name="Moffat K.S."/>
            <person name="Cronin L.A."/>
            <person name="Shen M."/>
            <person name="Pai G."/>
            <person name="Van Aken S."/>
            <person name="Umayam L."/>
            <person name="Tallon L.J."/>
            <person name="Gill J.E."/>
            <person name="Adams M.D."/>
            <person name="Carrera A.J."/>
            <person name="Creasy T.H."/>
            <person name="Goodman H.M."/>
            <person name="Somerville C.R."/>
            <person name="Copenhaver G.P."/>
            <person name="Preuss D."/>
            <person name="Nierman W.C."/>
            <person name="White O."/>
            <person name="Eisen J.A."/>
            <person name="Salzberg S.L."/>
            <person name="Fraser C.M."/>
            <person name="Venter J.C."/>
        </authorList>
    </citation>
    <scope>NUCLEOTIDE SEQUENCE [LARGE SCALE GENOMIC DNA]</scope>
    <source>
        <strain>cv. Columbia</strain>
    </source>
</reference>
<reference key="3">
    <citation type="journal article" date="2017" name="Plant J.">
        <title>Araport11: a complete reannotation of the Arabidopsis thaliana reference genome.</title>
        <authorList>
            <person name="Cheng C.Y."/>
            <person name="Krishnakumar V."/>
            <person name="Chan A.P."/>
            <person name="Thibaud-Nissen F."/>
            <person name="Schobel S."/>
            <person name="Town C.D."/>
        </authorList>
    </citation>
    <scope>GENOME REANNOTATION</scope>
    <source>
        <strain>cv. Columbia</strain>
    </source>
</reference>
<reference key="4">
    <citation type="journal article" date="2003" name="Science">
        <title>Empirical analysis of transcriptional activity in the Arabidopsis genome.</title>
        <authorList>
            <person name="Yamada K."/>
            <person name="Lim J."/>
            <person name="Dale J.M."/>
            <person name="Chen H."/>
            <person name="Shinn P."/>
            <person name="Palm C.J."/>
            <person name="Southwick A.M."/>
            <person name="Wu H.C."/>
            <person name="Kim C.J."/>
            <person name="Nguyen M."/>
            <person name="Pham P.K."/>
            <person name="Cheuk R.F."/>
            <person name="Karlin-Newmann G."/>
            <person name="Liu S.X."/>
            <person name="Lam B."/>
            <person name="Sakano H."/>
            <person name="Wu T."/>
            <person name="Yu G."/>
            <person name="Miranda M."/>
            <person name="Quach H.L."/>
            <person name="Tripp M."/>
            <person name="Chang C.H."/>
            <person name="Lee J.M."/>
            <person name="Toriumi M.J."/>
            <person name="Chan M.M."/>
            <person name="Tang C.C."/>
            <person name="Onodera C.S."/>
            <person name="Deng J.M."/>
            <person name="Akiyama K."/>
            <person name="Ansari Y."/>
            <person name="Arakawa T."/>
            <person name="Banh J."/>
            <person name="Banno F."/>
            <person name="Bowser L."/>
            <person name="Brooks S.Y."/>
            <person name="Carninci P."/>
            <person name="Chao Q."/>
            <person name="Choy N."/>
            <person name="Enju A."/>
            <person name="Goldsmith A.D."/>
            <person name="Gurjal M."/>
            <person name="Hansen N.F."/>
            <person name="Hayashizaki Y."/>
            <person name="Johnson-Hopson C."/>
            <person name="Hsuan V.W."/>
            <person name="Iida K."/>
            <person name="Karnes M."/>
            <person name="Khan S."/>
            <person name="Koesema E."/>
            <person name="Ishida J."/>
            <person name="Jiang P.X."/>
            <person name="Jones T."/>
            <person name="Kawai J."/>
            <person name="Kamiya A."/>
            <person name="Meyers C."/>
            <person name="Nakajima M."/>
            <person name="Narusaka M."/>
            <person name="Seki M."/>
            <person name="Sakurai T."/>
            <person name="Satou M."/>
            <person name="Tamse R."/>
            <person name="Vaysberg M."/>
            <person name="Wallender E.K."/>
            <person name="Wong C."/>
            <person name="Yamamura Y."/>
            <person name="Yuan S."/>
            <person name="Shinozaki K."/>
            <person name="Davis R.W."/>
            <person name="Theologis A."/>
            <person name="Ecker J.R."/>
        </authorList>
    </citation>
    <scope>NUCLEOTIDE SEQUENCE [LARGE SCALE MRNA] (ISOFORM 1)</scope>
    <source>
        <strain>cv. Columbia</strain>
    </source>
</reference>
<reference key="5">
    <citation type="journal article" date="2004" name="Genome Res.">
        <title>Whole genome sequence comparisons and 'full-length' cDNA sequences: a combined approach to evaluate and improve Arabidopsis genome annotation.</title>
        <authorList>
            <person name="Castelli V."/>
            <person name="Aury J.-M."/>
            <person name="Jaillon O."/>
            <person name="Wincker P."/>
            <person name="Clepet C."/>
            <person name="Menard M."/>
            <person name="Cruaud C."/>
            <person name="Quetier F."/>
            <person name="Scarpelli C."/>
            <person name="Schaechter V."/>
            <person name="Temple G."/>
            <person name="Caboche M."/>
            <person name="Weissenbach J."/>
            <person name="Salanoubat M."/>
        </authorList>
    </citation>
    <scope>NUCLEOTIDE SEQUENCE [LARGE SCALE MRNA] (ISOFORM 2)</scope>
    <source>
        <strain>cv. Columbia</strain>
    </source>
</reference>
<reference key="6">
    <citation type="journal article" date="2009" name="DNA Res.">
        <title>Analysis of multiple occurrences of alternative splicing events in Arabidopsis thaliana using novel sequenced full-length cDNAs.</title>
        <authorList>
            <person name="Iida K."/>
            <person name="Fukami-Kobayashi K."/>
            <person name="Toyoda A."/>
            <person name="Sakaki Y."/>
            <person name="Kobayashi M."/>
            <person name="Seki M."/>
            <person name="Shinozaki K."/>
        </authorList>
    </citation>
    <scope>NUCLEOTIDE SEQUENCE [LARGE SCALE MRNA] (ISOFORM 1)</scope>
    <source>
        <strain>cv. Columbia</strain>
        <tissue>Rosette leaf</tissue>
    </source>
</reference>
<reference key="7">
    <citation type="submission" date="2002-03" db="EMBL/GenBank/DDBJ databases">
        <title>Full-length cDNA from Arabidopsis thaliana.</title>
        <authorList>
            <person name="Brover V.V."/>
            <person name="Troukhan M.E."/>
            <person name="Alexandrov N.A."/>
            <person name="Lu Y.-P."/>
            <person name="Flavell R.B."/>
            <person name="Feldmann K.A."/>
        </authorList>
    </citation>
    <scope>NUCLEOTIDE SEQUENCE [LARGE SCALE MRNA] (ISOFORM 1)</scope>
</reference>
<reference key="8">
    <citation type="journal article" date="1999" name="Mol. Plant Microbe Interact.">
        <title>The plant-growth-promoting rhizobacterium Paenibacillus polymyxa induces changes in Arabidopsis thaliana gene expression: a possible connection between biotic and abiotic stress responses.</title>
        <authorList>
            <person name="Timmusk S."/>
            <person name="Wagner E.G."/>
        </authorList>
    </citation>
    <scope>INDUCTION BY PAENIBACILLUS POLYMYXA</scope>
</reference>
<reference key="9">
    <citation type="journal article" date="2001" name="Eur. J. Biochem.">
        <title>Identification of genes expressed in response to light stress in leaves of Arabidopsis thaliana using RNA differential display.</title>
        <authorList>
            <person name="Dunaeva M."/>
            <person name="Adamska I."/>
        </authorList>
    </citation>
    <scope>INDUCTION BY LIGHT AND ABIOTIC STRESS</scope>
    <scope>SUBCELLULAR LOCATION</scope>
</reference>
<reference key="10">
    <citation type="journal article" date="2003" name="Adv. Space Res.">
        <title>Hypergravity-induced changes in gene expression in Arabidopsis hypocotyls.</title>
        <authorList>
            <person name="Yoshioka R."/>
            <person name="Soga K."/>
            <person name="Wakabayashi K."/>
            <person name="Takeba G."/>
            <person name="Hoson T."/>
        </authorList>
    </citation>
    <scope>INDUCTION BY HYPERGRAVITY</scope>
</reference>
<reference key="11">
    <citation type="journal article" date="2005" name="Mol. Genet. Genomics">
        <title>Four distinct classes of proteins as interaction partners of the PABC domain of Arabidopsis thaliana Poly(A)-binding proteins.</title>
        <authorList>
            <person name="Bravo J."/>
            <person name="Aguilar-Henonin L."/>
            <person name="Olmedo G."/>
            <person name="Guzman P."/>
        </authorList>
    </citation>
    <scope>GENE FAMILY</scope>
    <scope>PAM2 MOTIF</scope>
    <scope>INTERACTION WITH PAB2</scope>
    <scope>MUTAGENESIS OF 9-SER--PRO-13</scope>
    <scope>TISSUE SPECIFICITY</scope>
</reference>
<reference key="12">
    <citation type="journal article" date="2006" name="Plant Physiol.">
        <title>EARLY RESPONSIVE TO DEHYDRATION 15, a negative regulator of abscisic acid responses in Arabidopsis.</title>
        <authorList>
            <person name="Kariola T."/>
            <person name="Brader G."/>
            <person name="Helenius E."/>
            <person name="Li J."/>
            <person name="Heino P."/>
            <person name="Palva E.T."/>
        </authorList>
    </citation>
    <scope>FUNCTION</scope>
    <scope>DISRUPTION PHENOTYPE</scope>
    <scope>INDUCTION BY BIOTIC AND ABIOTIC STRESS</scope>
</reference>
<reference key="13">
    <citation type="journal article" date="2008" name="Plant Cell">
        <title>MATERNALLY EXPRESSED PAB C-TERMINAL, a novel imprinted gene in Arabidopsis, encodes the conserved C-terminal domain of polyadenylate binding proteins.</title>
        <authorList>
            <person name="Tiwari S."/>
            <person name="Schulz R."/>
            <person name="Ikeda Y."/>
            <person name="Dytham L."/>
            <person name="Bravo J."/>
            <person name="Mathers L."/>
            <person name="Spielman M."/>
            <person name="Guzman P."/>
            <person name="Oakey R.J."/>
            <person name="Kinoshita T."/>
            <person name="Scott R.J."/>
        </authorList>
    </citation>
    <scope>INTERACTION WITH MPC</scope>
</reference>
<reference key="14">
    <citation type="journal article" date="2012" name="Plant Sci.">
        <title>ERD15--an attenuator of plant ABA responses and stomatal aperture.</title>
        <authorList>
            <person name="Aalto M.K."/>
            <person name="Helenius E."/>
            <person name="Kariola T."/>
            <person name="Pennanen V."/>
            <person name="Heino P."/>
            <person name="Horak H."/>
            <person name="Puzorjova I."/>
            <person name="Kollist H."/>
            <person name="Palva E.T."/>
        </authorList>
    </citation>
    <scope>PAM2 MOTIF</scope>
    <scope>INTERACTION WITH PAB2; PAB4 AND PAB8</scope>
    <scope>REVIEW</scope>
</reference>
<proteinExistence type="evidence at protein level"/>
<accession>Q39096</accession>
<accession>Q3E6W2</accession>
<accession>Q8LBP5</accession>
<organism>
    <name type="scientific">Arabidopsis thaliana</name>
    <name type="common">Mouse-ear cress</name>
    <dbReference type="NCBI Taxonomy" id="3702"/>
    <lineage>
        <taxon>Eukaryota</taxon>
        <taxon>Viridiplantae</taxon>
        <taxon>Streptophyta</taxon>
        <taxon>Embryophyta</taxon>
        <taxon>Tracheophyta</taxon>
        <taxon>Spermatophyta</taxon>
        <taxon>Magnoliopsida</taxon>
        <taxon>eudicotyledons</taxon>
        <taxon>Gunneridae</taxon>
        <taxon>Pentapetalae</taxon>
        <taxon>rosids</taxon>
        <taxon>malvids</taxon>
        <taxon>Brassicales</taxon>
        <taxon>Brassicaceae</taxon>
        <taxon>Camelineae</taxon>
        <taxon>Arabidopsis</taxon>
    </lineage>
</organism>
<keyword id="KW-0025">Alternative splicing</keyword>
<keyword id="KW-0963">Cytoplasm</keyword>
<keyword id="KW-1185">Reference proteome</keyword>
<protein>
    <recommendedName>
        <fullName>Protein EARLY RESPONSIVE TO DEHYDRATION 15</fullName>
    </recommendedName>
    <alternativeName>
        <fullName>PAM2-containing protein CID1</fullName>
    </alternativeName>
    <alternativeName>
        <fullName>Polyadenylate-binding protein-interacting protein 1</fullName>
        <shortName>PABP-interacting protein 1</shortName>
        <shortName>Poly(A)-binding protein-interacting protein 1</shortName>
    </alternativeName>
    <alternativeName>
        <fullName>Protein CTC-INTERACTING DOMAIN 1</fullName>
    </alternativeName>
    <alternativeName>
        <fullName>Protein LIGHT STRESS-REGULATED 1</fullName>
    </alternativeName>
</protein>
<feature type="chain" id="PRO_0000419743" description="Protein EARLY RESPONSIVE TO DEHYDRATION 15">
    <location>
        <begin position="1"/>
        <end position="163"/>
    </location>
</feature>
<feature type="region of interest" description="Disordered" evidence="1">
    <location>
        <begin position="118"/>
        <end position="163"/>
    </location>
</feature>
<feature type="short sequence motif" description="PAM2-like">
    <location>
        <begin position="10"/>
        <end position="20"/>
    </location>
</feature>
<feature type="splice variant" id="VSP_044341" description="In isoform 2." evidence="10">
    <original>FGKNGE</original>
    <variation>KSVSFP</variation>
    <location>
        <begin position="115"/>
        <end position="120"/>
    </location>
</feature>
<feature type="splice variant" id="VSP_044342" description="In isoform 2." evidence="10">
    <location>
        <begin position="121"/>
        <end position="163"/>
    </location>
</feature>
<feature type="mutagenesis site" description="Loss of PAB2-binding." evidence="5">
    <location>
        <begin position="9"/>
        <end position="13"/>
    </location>
</feature>
<feature type="sequence conflict" description="In Ref. 7; AAM64638." evidence="11" ref="7">
    <original>D</original>
    <variation>Y</variation>
    <location>
        <position position="82"/>
    </location>
</feature>